<reference key="1">
    <citation type="journal article" date="2002" name="Nat. Biotechnol.">
        <title>Genome sequence of the dissimilatory metal ion-reducing bacterium Shewanella oneidensis.</title>
        <authorList>
            <person name="Heidelberg J.F."/>
            <person name="Paulsen I.T."/>
            <person name="Nelson K.E."/>
            <person name="Gaidos E.J."/>
            <person name="Nelson W.C."/>
            <person name="Read T.D."/>
            <person name="Eisen J.A."/>
            <person name="Seshadri R."/>
            <person name="Ward N.L."/>
            <person name="Methe B.A."/>
            <person name="Clayton R.A."/>
            <person name="Meyer T."/>
            <person name="Tsapin A."/>
            <person name="Scott J."/>
            <person name="Beanan M.J."/>
            <person name="Brinkac L.M."/>
            <person name="Daugherty S.C."/>
            <person name="DeBoy R.T."/>
            <person name="Dodson R.J."/>
            <person name="Durkin A.S."/>
            <person name="Haft D.H."/>
            <person name="Kolonay J.F."/>
            <person name="Madupu R."/>
            <person name="Peterson J.D."/>
            <person name="Umayam L.A."/>
            <person name="White O."/>
            <person name="Wolf A.M."/>
            <person name="Vamathevan J.J."/>
            <person name="Weidman J.F."/>
            <person name="Impraim M."/>
            <person name="Lee K."/>
            <person name="Berry K.J."/>
            <person name="Lee C."/>
            <person name="Mueller J."/>
            <person name="Khouri H.M."/>
            <person name="Gill J."/>
            <person name="Utterback T.R."/>
            <person name="McDonald L.A."/>
            <person name="Feldblyum T.V."/>
            <person name="Smith H.O."/>
            <person name="Venter J.C."/>
            <person name="Nealson K.H."/>
            <person name="Fraser C.M."/>
        </authorList>
    </citation>
    <scope>NUCLEOTIDE SEQUENCE [LARGE SCALE GENOMIC DNA]</scope>
    <source>
        <strain>ATCC 700550 / JCM 31522 / CIP 106686 / LMG 19005 / NCIMB 14063 / MR-1</strain>
    </source>
</reference>
<feature type="chain" id="PRO_0000120877" description="Uracil phosphoribosyltransferase">
    <location>
        <begin position="1"/>
        <end position="208"/>
    </location>
</feature>
<feature type="binding site" evidence="1">
    <location>
        <position position="78"/>
    </location>
    <ligand>
        <name>5-phospho-alpha-D-ribose 1-diphosphate</name>
        <dbReference type="ChEBI" id="CHEBI:58017"/>
    </ligand>
</feature>
<feature type="binding site" evidence="1">
    <location>
        <position position="103"/>
    </location>
    <ligand>
        <name>5-phospho-alpha-D-ribose 1-diphosphate</name>
        <dbReference type="ChEBI" id="CHEBI:58017"/>
    </ligand>
</feature>
<feature type="binding site" evidence="1">
    <location>
        <begin position="130"/>
        <end position="138"/>
    </location>
    <ligand>
        <name>5-phospho-alpha-D-ribose 1-diphosphate</name>
        <dbReference type="ChEBI" id="CHEBI:58017"/>
    </ligand>
</feature>
<feature type="binding site" evidence="1">
    <location>
        <position position="193"/>
    </location>
    <ligand>
        <name>uracil</name>
        <dbReference type="ChEBI" id="CHEBI:17568"/>
    </ligand>
</feature>
<feature type="binding site" evidence="1">
    <location>
        <begin position="198"/>
        <end position="200"/>
    </location>
    <ligand>
        <name>uracil</name>
        <dbReference type="ChEBI" id="CHEBI:17568"/>
    </ligand>
</feature>
<feature type="binding site" evidence="1">
    <location>
        <position position="199"/>
    </location>
    <ligand>
        <name>5-phospho-alpha-D-ribose 1-diphosphate</name>
        <dbReference type="ChEBI" id="CHEBI:58017"/>
    </ligand>
</feature>
<proteinExistence type="inferred from homology"/>
<organism>
    <name type="scientific">Shewanella oneidensis (strain ATCC 700550 / JCM 31522 / CIP 106686 / LMG 19005 / NCIMB 14063 / MR-1)</name>
    <dbReference type="NCBI Taxonomy" id="211586"/>
    <lineage>
        <taxon>Bacteria</taxon>
        <taxon>Pseudomonadati</taxon>
        <taxon>Pseudomonadota</taxon>
        <taxon>Gammaproteobacteria</taxon>
        <taxon>Alteromonadales</taxon>
        <taxon>Shewanellaceae</taxon>
        <taxon>Shewanella</taxon>
    </lineage>
</organism>
<dbReference type="EC" id="2.4.2.9" evidence="1"/>
<dbReference type="EMBL" id="AE014299">
    <property type="protein sequence ID" value="AAN55785.1"/>
    <property type="molecule type" value="Genomic_DNA"/>
</dbReference>
<dbReference type="RefSeq" id="NP_718341.1">
    <property type="nucleotide sequence ID" value="NC_004347.2"/>
</dbReference>
<dbReference type="RefSeq" id="WP_011072698.1">
    <property type="nucleotide sequence ID" value="NZ_CP053946.1"/>
</dbReference>
<dbReference type="SMR" id="Q8EDI9"/>
<dbReference type="STRING" id="211586.SO_2759"/>
<dbReference type="PaxDb" id="211586-SO_2759"/>
<dbReference type="KEGG" id="son:SO_2759"/>
<dbReference type="PATRIC" id="fig|211586.12.peg.2659"/>
<dbReference type="eggNOG" id="COG0035">
    <property type="taxonomic scope" value="Bacteria"/>
</dbReference>
<dbReference type="HOGENOM" id="CLU_067096_2_2_6"/>
<dbReference type="OrthoDB" id="9781675at2"/>
<dbReference type="PhylomeDB" id="Q8EDI9"/>
<dbReference type="BioCyc" id="SONE211586:G1GMP-2546-MONOMER"/>
<dbReference type="UniPathway" id="UPA00574">
    <property type="reaction ID" value="UER00636"/>
</dbReference>
<dbReference type="Proteomes" id="UP000008186">
    <property type="component" value="Chromosome"/>
</dbReference>
<dbReference type="GO" id="GO:0005525">
    <property type="term" value="F:GTP binding"/>
    <property type="evidence" value="ECO:0007669"/>
    <property type="project" value="UniProtKB-KW"/>
</dbReference>
<dbReference type="GO" id="GO:0000287">
    <property type="term" value="F:magnesium ion binding"/>
    <property type="evidence" value="ECO:0007669"/>
    <property type="project" value="UniProtKB-UniRule"/>
</dbReference>
<dbReference type="GO" id="GO:0004845">
    <property type="term" value="F:uracil phosphoribosyltransferase activity"/>
    <property type="evidence" value="ECO:0007669"/>
    <property type="project" value="UniProtKB-UniRule"/>
</dbReference>
<dbReference type="GO" id="GO:0044206">
    <property type="term" value="P:UMP salvage"/>
    <property type="evidence" value="ECO:0007669"/>
    <property type="project" value="UniProtKB-UniRule"/>
</dbReference>
<dbReference type="GO" id="GO:0006223">
    <property type="term" value="P:uracil salvage"/>
    <property type="evidence" value="ECO:0007669"/>
    <property type="project" value="InterPro"/>
</dbReference>
<dbReference type="CDD" id="cd06223">
    <property type="entry name" value="PRTases_typeI"/>
    <property type="match status" value="1"/>
</dbReference>
<dbReference type="FunFam" id="3.40.50.2020:FF:000003">
    <property type="entry name" value="Uracil phosphoribosyltransferase"/>
    <property type="match status" value="1"/>
</dbReference>
<dbReference type="Gene3D" id="3.40.50.2020">
    <property type="match status" value="1"/>
</dbReference>
<dbReference type="HAMAP" id="MF_01218_B">
    <property type="entry name" value="Upp_B"/>
    <property type="match status" value="1"/>
</dbReference>
<dbReference type="InterPro" id="IPR000836">
    <property type="entry name" value="PRibTrfase_dom"/>
</dbReference>
<dbReference type="InterPro" id="IPR029057">
    <property type="entry name" value="PRTase-like"/>
</dbReference>
<dbReference type="InterPro" id="IPR034332">
    <property type="entry name" value="Upp_B"/>
</dbReference>
<dbReference type="InterPro" id="IPR050054">
    <property type="entry name" value="UPRTase/APRTase"/>
</dbReference>
<dbReference type="InterPro" id="IPR005765">
    <property type="entry name" value="Ura_phspho_trans"/>
</dbReference>
<dbReference type="NCBIfam" id="NF001097">
    <property type="entry name" value="PRK00129.1"/>
    <property type="match status" value="1"/>
</dbReference>
<dbReference type="NCBIfam" id="TIGR01091">
    <property type="entry name" value="upp"/>
    <property type="match status" value="1"/>
</dbReference>
<dbReference type="PANTHER" id="PTHR32315">
    <property type="entry name" value="ADENINE PHOSPHORIBOSYLTRANSFERASE"/>
    <property type="match status" value="1"/>
</dbReference>
<dbReference type="PANTHER" id="PTHR32315:SF4">
    <property type="entry name" value="URACIL PHOSPHORIBOSYLTRANSFERASE, CHLOROPLASTIC"/>
    <property type="match status" value="1"/>
</dbReference>
<dbReference type="Pfam" id="PF14681">
    <property type="entry name" value="UPRTase"/>
    <property type="match status" value="1"/>
</dbReference>
<dbReference type="SUPFAM" id="SSF53271">
    <property type="entry name" value="PRTase-like"/>
    <property type="match status" value="1"/>
</dbReference>
<keyword id="KW-0021">Allosteric enzyme</keyword>
<keyword id="KW-0328">Glycosyltransferase</keyword>
<keyword id="KW-0342">GTP-binding</keyword>
<keyword id="KW-0460">Magnesium</keyword>
<keyword id="KW-0547">Nucleotide-binding</keyword>
<keyword id="KW-1185">Reference proteome</keyword>
<keyword id="KW-0808">Transferase</keyword>
<comment type="function">
    <text evidence="1">Catalyzes the conversion of uracil and 5-phospho-alpha-D-ribose 1-diphosphate (PRPP) to UMP and diphosphate.</text>
</comment>
<comment type="catalytic activity">
    <reaction evidence="1">
        <text>UMP + diphosphate = 5-phospho-alpha-D-ribose 1-diphosphate + uracil</text>
        <dbReference type="Rhea" id="RHEA:13017"/>
        <dbReference type="ChEBI" id="CHEBI:17568"/>
        <dbReference type="ChEBI" id="CHEBI:33019"/>
        <dbReference type="ChEBI" id="CHEBI:57865"/>
        <dbReference type="ChEBI" id="CHEBI:58017"/>
        <dbReference type="EC" id="2.4.2.9"/>
    </reaction>
</comment>
<comment type="cofactor">
    <cofactor evidence="1">
        <name>Mg(2+)</name>
        <dbReference type="ChEBI" id="CHEBI:18420"/>
    </cofactor>
    <text evidence="1">Binds 1 Mg(2+) ion per subunit. The magnesium is bound as Mg-PRPP.</text>
</comment>
<comment type="activity regulation">
    <text evidence="1">Allosterically activated by GTP.</text>
</comment>
<comment type="pathway">
    <text evidence="1">Pyrimidine metabolism; UMP biosynthesis via salvage pathway; UMP from uracil: step 1/1.</text>
</comment>
<comment type="similarity">
    <text evidence="1">Belongs to the UPRTase family.</text>
</comment>
<protein>
    <recommendedName>
        <fullName evidence="1">Uracil phosphoribosyltransferase</fullName>
        <ecNumber evidence="1">2.4.2.9</ecNumber>
    </recommendedName>
    <alternativeName>
        <fullName evidence="1">UMP pyrophosphorylase</fullName>
    </alternativeName>
    <alternativeName>
        <fullName evidence="1">UPRTase</fullName>
    </alternativeName>
</protein>
<sequence length="208" mass="22570">MKVVEVKHPLVRHKIGLMREGDISTKRFRELAAEVGSLLTYEATADFETETVTIEGWNGPVDVDQIKGKKVTVVPILRAGLGMMDGVLEHIPSARISVVGIYRDEETLEPVPYFEKLASDMNERIALIVDPMLATGGSMIATIDLLKKRGCTSIKALVLVAAPEGIKALEAAHPDVELYTAAIDRCLNEKGYILPGLGDAGDKIFGTK</sequence>
<accession>Q8EDI9</accession>
<gene>
    <name evidence="1" type="primary">upp</name>
    <name type="ordered locus">SO_2759</name>
</gene>
<name>UPP_SHEON</name>
<evidence type="ECO:0000255" key="1">
    <source>
        <dbReference type="HAMAP-Rule" id="MF_01218"/>
    </source>
</evidence>